<gene>
    <name type="ordered locus">At2g20070</name>
    <name type="ORF">T2G17.13</name>
</gene>
<evidence type="ECO:0000250" key="1"/>
<evidence type="ECO:0000255" key="2"/>
<evidence type="ECO:0000305" key="3"/>
<feature type="signal peptide" evidence="2">
    <location>
        <begin position="1"/>
        <end position="30"/>
    </location>
</feature>
<feature type="chain" id="PRO_0000379649" description="Defensin-like protein 78">
    <location>
        <begin position="31"/>
        <end position="89"/>
    </location>
</feature>
<feature type="disulfide bond" evidence="1">
    <location>
        <begin position="40"/>
        <end position="75"/>
    </location>
</feature>
<feature type="disulfide bond" evidence="1">
    <location>
        <begin position="44"/>
        <end position="67"/>
    </location>
</feature>
<feature type="disulfide bond" evidence="1">
    <location>
        <begin position="52"/>
        <end position="73"/>
    </location>
</feature>
<feature type="disulfide bond" evidence="1">
    <location>
        <begin position="56"/>
        <end position="74"/>
    </location>
</feature>
<sequence length="89" mass="9312">MANNMVASPYKNTFMMIALVLILLISGSEARSNGIYDPMCPGVCGNLVKPDCNGLCHELGFPAGGYCKPGNTCCCKKKDSGPVDVPPTA</sequence>
<reference key="1">
    <citation type="journal article" date="1999" name="Nature">
        <title>Sequence and analysis of chromosome 2 of the plant Arabidopsis thaliana.</title>
        <authorList>
            <person name="Lin X."/>
            <person name="Kaul S."/>
            <person name="Rounsley S.D."/>
            <person name="Shea T.P."/>
            <person name="Benito M.-I."/>
            <person name="Town C.D."/>
            <person name="Fujii C.Y."/>
            <person name="Mason T.M."/>
            <person name="Bowman C.L."/>
            <person name="Barnstead M.E."/>
            <person name="Feldblyum T.V."/>
            <person name="Buell C.R."/>
            <person name="Ketchum K.A."/>
            <person name="Lee J.J."/>
            <person name="Ronning C.M."/>
            <person name="Koo H.L."/>
            <person name="Moffat K.S."/>
            <person name="Cronin L.A."/>
            <person name="Shen M."/>
            <person name="Pai G."/>
            <person name="Van Aken S."/>
            <person name="Umayam L."/>
            <person name="Tallon L.J."/>
            <person name="Gill J.E."/>
            <person name="Adams M.D."/>
            <person name="Carrera A.J."/>
            <person name="Creasy T.H."/>
            <person name="Goodman H.M."/>
            <person name="Somerville C.R."/>
            <person name="Copenhaver G.P."/>
            <person name="Preuss D."/>
            <person name="Nierman W.C."/>
            <person name="White O."/>
            <person name="Eisen J.A."/>
            <person name="Salzberg S.L."/>
            <person name="Fraser C.M."/>
            <person name="Venter J.C."/>
        </authorList>
    </citation>
    <scope>NUCLEOTIDE SEQUENCE [LARGE SCALE GENOMIC DNA]</scope>
    <source>
        <strain>cv. Columbia</strain>
    </source>
</reference>
<reference key="2">
    <citation type="journal article" date="2017" name="Plant J.">
        <title>Araport11: a complete reannotation of the Arabidopsis thaliana reference genome.</title>
        <authorList>
            <person name="Cheng C.Y."/>
            <person name="Krishnakumar V."/>
            <person name="Chan A.P."/>
            <person name="Thibaud-Nissen F."/>
            <person name="Schobel S."/>
            <person name="Town C.D."/>
        </authorList>
    </citation>
    <scope>GENOME REANNOTATION</scope>
    <source>
        <strain>cv. Columbia</strain>
    </source>
</reference>
<reference key="3">
    <citation type="journal article" date="2006" name="Plant Biotechnol. J.">
        <title>Simultaneous high-throughput recombinational cloning of open reading frames in closed and open configurations.</title>
        <authorList>
            <person name="Underwood B.A."/>
            <person name="Vanderhaeghen R."/>
            <person name="Whitford R."/>
            <person name="Town C.D."/>
            <person name="Hilson P."/>
        </authorList>
    </citation>
    <scope>NUCLEOTIDE SEQUENCE [LARGE SCALE MRNA]</scope>
    <source>
        <strain>cv. Columbia</strain>
    </source>
</reference>
<reference key="4">
    <citation type="journal article" date="2007" name="Plant J.">
        <title>Small cysteine-rich peptides resembling antimicrobial peptides have been under-predicted in plants.</title>
        <authorList>
            <person name="Silverstein K.A.T."/>
            <person name="Moskal W.A. Jr."/>
            <person name="Wu H.C."/>
            <person name="Underwood B.A."/>
            <person name="Graham M.A."/>
            <person name="Town C.D."/>
            <person name="VandenBosch K.A."/>
        </authorList>
    </citation>
    <scope>NUCLEOTIDE SEQUENCE [LARGE SCALE MRNA]</scope>
    <source>
        <strain>cv. Columbia</strain>
    </source>
</reference>
<reference key="5">
    <citation type="journal article" date="2005" name="Plant Physiol.">
        <title>Genome organization of more than 300 defensin-like genes in Arabidopsis.</title>
        <authorList>
            <person name="Silverstein K.A.T."/>
            <person name="Graham M.A."/>
            <person name="Paape T.D."/>
            <person name="VandenBosch K.A."/>
        </authorList>
    </citation>
    <scope>GENE FAMILY</scope>
</reference>
<dbReference type="EMBL" id="AC006081">
    <property type="protein sequence ID" value="AAD24389.1"/>
    <property type="molecule type" value="Genomic_DNA"/>
</dbReference>
<dbReference type="EMBL" id="CP002685">
    <property type="protein sequence ID" value="AEC06961.1"/>
    <property type="molecule type" value="Genomic_DNA"/>
</dbReference>
<dbReference type="EMBL" id="DQ446528">
    <property type="protein sequence ID" value="ABE65832.1"/>
    <property type="molecule type" value="mRNA"/>
</dbReference>
<dbReference type="EMBL" id="DQ912230">
    <property type="protein sequence ID" value="ABK27944.1"/>
    <property type="status" value="ALT_SEQ"/>
    <property type="molecule type" value="mRNA"/>
</dbReference>
<dbReference type="EMBL" id="EF182808">
    <property type="status" value="NOT_ANNOTATED_CDS"/>
    <property type="molecule type" value="mRNA"/>
</dbReference>
<dbReference type="PIR" id="F84584">
    <property type="entry name" value="F84584"/>
</dbReference>
<dbReference type="RefSeq" id="NP_179597.1">
    <property type="nucleotide sequence ID" value="NM_127565.4"/>
</dbReference>
<dbReference type="SMR" id="Q9SL74"/>
<dbReference type="PaxDb" id="3702-AT2G20070.1"/>
<dbReference type="EnsemblPlants" id="AT2G20070.1">
    <property type="protein sequence ID" value="AT2G20070.1"/>
    <property type="gene ID" value="AT2G20070"/>
</dbReference>
<dbReference type="GeneID" id="816526"/>
<dbReference type="Gramene" id="AT2G20070.1">
    <property type="protein sequence ID" value="AT2G20070.1"/>
    <property type="gene ID" value="AT2G20070"/>
</dbReference>
<dbReference type="KEGG" id="ath:AT2G20070"/>
<dbReference type="Araport" id="AT2G20070"/>
<dbReference type="TAIR" id="AT2G20070"/>
<dbReference type="HOGENOM" id="CLU_2609304_0_0_1"/>
<dbReference type="InParanoid" id="Q9SL74"/>
<dbReference type="OMA" id="NTCCCKK"/>
<dbReference type="PhylomeDB" id="Q9SL74"/>
<dbReference type="PRO" id="PR:Q9SL74"/>
<dbReference type="Proteomes" id="UP000006548">
    <property type="component" value="Chromosome 2"/>
</dbReference>
<dbReference type="ExpressionAtlas" id="Q9SL74">
    <property type="expression patterns" value="baseline and differential"/>
</dbReference>
<dbReference type="GO" id="GO:0005576">
    <property type="term" value="C:extracellular region"/>
    <property type="evidence" value="ECO:0007669"/>
    <property type="project" value="UniProtKB-SubCell"/>
</dbReference>
<dbReference type="GO" id="GO:0050832">
    <property type="term" value="P:defense response to fungus"/>
    <property type="evidence" value="ECO:0007669"/>
    <property type="project" value="UniProtKB-KW"/>
</dbReference>
<dbReference type="GO" id="GO:0031640">
    <property type="term" value="P:killing of cells of another organism"/>
    <property type="evidence" value="ECO:0007669"/>
    <property type="project" value="UniProtKB-KW"/>
</dbReference>
<organism>
    <name type="scientific">Arabidopsis thaliana</name>
    <name type="common">Mouse-ear cress</name>
    <dbReference type="NCBI Taxonomy" id="3702"/>
    <lineage>
        <taxon>Eukaryota</taxon>
        <taxon>Viridiplantae</taxon>
        <taxon>Streptophyta</taxon>
        <taxon>Embryophyta</taxon>
        <taxon>Tracheophyta</taxon>
        <taxon>Spermatophyta</taxon>
        <taxon>Magnoliopsida</taxon>
        <taxon>eudicotyledons</taxon>
        <taxon>Gunneridae</taxon>
        <taxon>Pentapetalae</taxon>
        <taxon>rosids</taxon>
        <taxon>malvids</taxon>
        <taxon>Brassicales</taxon>
        <taxon>Brassicaceae</taxon>
        <taxon>Camelineae</taxon>
        <taxon>Arabidopsis</taxon>
    </lineage>
</organism>
<comment type="subcellular location">
    <subcellularLocation>
        <location evidence="1">Secreted</location>
    </subcellularLocation>
</comment>
<comment type="similarity">
    <text evidence="3">Belongs to the DEFL family.</text>
</comment>
<comment type="sequence caution" evidence="3">
    <conflict type="erroneous termination">
        <sequence resource="EMBL-CDS" id="ABK27944"/>
    </conflict>
    <text>Extended C-terminus.</text>
</comment>
<protein>
    <recommendedName>
        <fullName>Defensin-like protein 78</fullName>
    </recommendedName>
</protein>
<accession>Q9SL74</accession>
<accession>A0MJT1</accession>
<keyword id="KW-0929">Antimicrobial</keyword>
<keyword id="KW-1015">Disulfide bond</keyword>
<keyword id="KW-0295">Fungicide</keyword>
<keyword id="KW-0611">Plant defense</keyword>
<keyword id="KW-1185">Reference proteome</keyword>
<keyword id="KW-0964">Secreted</keyword>
<keyword id="KW-0732">Signal</keyword>
<name>DEF78_ARATH</name>
<proteinExistence type="inferred from homology"/>